<comment type="function">
    <text evidence="1">One of several proteins that assist in the late maturation steps of the functional core of the 30S ribosomal subunit. Associates with free 30S ribosomal subunits (but not with 30S subunits that are part of 70S ribosomes or polysomes). Required for efficient processing of 16S rRNA. May interact with the 5'-terminal helix region of 16S rRNA.</text>
</comment>
<comment type="subunit">
    <text evidence="1">Monomer. Binds 30S ribosomal subunits, but not 50S ribosomal subunits or 70S ribosomes.</text>
</comment>
<comment type="subcellular location">
    <subcellularLocation>
        <location evidence="1">Cytoplasm</location>
    </subcellularLocation>
</comment>
<comment type="similarity">
    <text evidence="1">Belongs to the RbfA family.</text>
</comment>
<feature type="chain" id="PRO_1000000228" description="Ribosome-binding factor A">
    <location>
        <begin position="1"/>
        <end position="116"/>
    </location>
</feature>
<sequence length="116" mass="13352">MANNFRTDRVGMEIKREVNEILQKKVRDPRVQGVTITDVQMLGDLSMAKVYYTIMSNLASDNQKAQTGLEKATGTIKRELGHNLKMYKIPDLTFVKDESIEYGNKIDQMLRDLEKK</sequence>
<proteinExistence type="inferred from homology"/>
<accession>A3CQ17</accession>
<organism>
    <name type="scientific">Streptococcus sanguinis (strain SK36)</name>
    <dbReference type="NCBI Taxonomy" id="388919"/>
    <lineage>
        <taxon>Bacteria</taxon>
        <taxon>Bacillati</taxon>
        <taxon>Bacillota</taxon>
        <taxon>Bacilli</taxon>
        <taxon>Lactobacillales</taxon>
        <taxon>Streptococcaceae</taxon>
        <taxon>Streptococcus</taxon>
    </lineage>
</organism>
<protein>
    <recommendedName>
        <fullName evidence="1">Ribosome-binding factor A</fullName>
    </recommendedName>
</protein>
<gene>
    <name evidence="1" type="primary">rbfA</name>
    <name type="ordered locus">SSA_1895</name>
</gene>
<reference key="1">
    <citation type="journal article" date="2007" name="J. Bacteriol.">
        <title>Genome of the opportunistic pathogen Streptococcus sanguinis.</title>
        <authorList>
            <person name="Xu P."/>
            <person name="Alves J.M."/>
            <person name="Kitten T."/>
            <person name="Brown A."/>
            <person name="Chen Z."/>
            <person name="Ozaki L.S."/>
            <person name="Manque P."/>
            <person name="Ge X."/>
            <person name="Serrano M.G."/>
            <person name="Puiu D."/>
            <person name="Hendricks S."/>
            <person name="Wang Y."/>
            <person name="Chaplin M.D."/>
            <person name="Akan D."/>
            <person name="Paik S."/>
            <person name="Peterson D.L."/>
            <person name="Macrina F.L."/>
            <person name="Buck G.A."/>
        </authorList>
    </citation>
    <scope>NUCLEOTIDE SEQUENCE [LARGE SCALE GENOMIC DNA]</scope>
    <source>
        <strain>SK36</strain>
    </source>
</reference>
<dbReference type="EMBL" id="CP000387">
    <property type="protein sequence ID" value="ABN45272.1"/>
    <property type="molecule type" value="Genomic_DNA"/>
</dbReference>
<dbReference type="RefSeq" id="WP_002893555.1">
    <property type="nucleotide sequence ID" value="NC_009009.1"/>
</dbReference>
<dbReference type="RefSeq" id="YP_001035822.1">
    <property type="nucleotide sequence ID" value="NC_009009.1"/>
</dbReference>
<dbReference type="SMR" id="A3CQ17"/>
<dbReference type="STRING" id="388919.SSA_1895"/>
<dbReference type="GeneID" id="48426233"/>
<dbReference type="KEGG" id="ssa:SSA_1895"/>
<dbReference type="PATRIC" id="fig|388919.9.peg.1797"/>
<dbReference type="eggNOG" id="COG0858">
    <property type="taxonomic scope" value="Bacteria"/>
</dbReference>
<dbReference type="HOGENOM" id="CLU_089475_3_0_9"/>
<dbReference type="OrthoDB" id="307788at2"/>
<dbReference type="Proteomes" id="UP000002148">
    <property type="component" value="Chromosome"/>
</dbReference>
<dbReference type="GO" id="GO:0005829">
    <property type="term" value="C:cytosol"/>
    <property type="evidence" value="ECO:0007669"/>
    <property type="project" value="TreeGrafter"/>
</dbReference>
<dbReference type="GO" id="GO:0043024">
    <property type="term" value="F:ribosomal small subunit binding"/>
    <property type="evidence" value="ECO:0007669"/>
    <property type="project" value="TreeGrafter"/>
</dbReference>
<dbReference type="GO" id="GO:0030490">
    <property type="term" value="P:maturation of SSU-rRNA"/>
    <property type="evidence" value="ECO:0007669"/>
    <property type="project" value="UniProtKB-UniRule"/>
</dbReference>
<dbReference type="FunFam" id="3.30.300.20:FF:000012">
    <property type="entry name" value="Ribosome-binding factor A"/>
    <property type="match status" value="1"/>
</dbReference>
<dbReference type="Gene3D" id="3.30.300.20">
    <property type="match status" value="1"/>
</dbReference>
<dbReference type="HAMAP" id="MF_00003">
    <property type="entry name" value="RbfA"/>
    <property type="match status" value="1"/>
</dbReference>
<dbReference type="InterPro" id="IPR015946">
    <property type="entry name" value="KH_dom-like_a/b"/>
</dbReference>
<dbReference type="InterPro" id="IPR000238">
    <property type="entry name" value="RbfA"/>
</dbReference>
<dbReference type="InterPro" id="IPR023799">
    <property type="entry name" value="RbfA_dom_sf"/>
</dbReference>
<dbReference type="InterPro" id="IPR020053">
    <property type="entry name" value="Ribosome-bd_factorA_CS"/>
</dbReference>
<dbReference type="NCBIfam" id="TIGR00082">
    <property type="entry name" value="rbfA"/>
    <property type="match status" value="1"/>
</dbReference>
<dbReference type="PANTHER" id="PTHR33515">
    <property type="entry name" value="RIBOSOME-BINDING FACTOR A, CHLOROPLASTIC-RELATED"/>
    <property type="match status" value="1"/>
</dbReference>
<dbReference type="PANTHER" id="PTHR33515:SF1">
    <property type="entry name" value="RIBOSOME-BINDING FACTOR A, CHLOROPLASTIC-RELATED"/>
    <property type="match status" value="1"/>
</dbReference>
<dbReference type="Pfam" id="PF02033">
    <property type="entry name" value="RBFA"/>
    <property type="match status" value="1"/>
</dbReference>
<dbReference type="SUPFAM" id="SSF89919">
    <property type="entry name" value="Ribosome-binding factor A, RbfA"/>
    <property type="match status" value="1"/>
</dbReference>
<dbReference type="PROSITE" id="PS01319">
    <property type="entry name" value="RBFA"/>
    <property type="match status" value="1"/>
</dbReference>
<name>RBFA_STRSV</name>
<evidence type="ECO:0000255" key="1">
    <source>
        <dbReference type="HAMAP-Rule" id="MF_00003"/>
    </source>
</evidence>
<keyword id="KW-0963">Cytoplasm</keyword>
<keyword id="KW-1185">Reference proteome</keyword>
<keyword id="KW-0690">Ribosome biogenesis</keyword>